<keyword id="KW-0067">ATP-binding</keyword>
<keyword id="KW-0963">Cytoplasm</keyword>
<keyword id="KW-0227">DNA damage</keyword>
<keyword id="KW-0228">DNA excision</keyword>
<keyword id="KW-0234">DNA repair</keyword>
<keyword id="KW-0267">Excision nuclease</keyword>
<keyword id="KW-0347">Helicase</keyword>
<keyword id="KW-0378">Hydrolase</keyword>
<keyword id="KW-0547">Nucleotide-binding</keyword>
<keyword id="KW-0742">SOS response</keyword>
<evidence type="ECO:0000255" key="1">
    <source>
        <dbReference type="HAMAP-Rule" id="MF_00204"/>
    </source>
</evidence>
<evidence type="ECO:0000256" key="2">
    <source>
        <dbReference type="SAM" id="MobiDB-lite"/>
    </source>
</evidence>
<comment type="function">
    <text evidence="1">The UvrABC repair system catalyzes the recognition and processing of DNA lesions. A damage recognition complex composed of 2 UvrA and 2 UvrB subunits scans DNA for abnormalities. Upon binding of the UvrA(2)B(2) complex to a putative damaged site, the DNA wraps around one UvrB monomer. DNA wrap is dependent on ATP binding by UvrB and probably causes local melting of the DNA helix, facilitating insertion of UvrB beta-hairpin between the DNA strands. Then UvrB probes one DNA strand for the presence of a lesion. If a lesion is found the UvrA subunits dissociate and the UvrB-DNA preincision complex is formed. This complex is subsequently bound by UvrC and the second UvrB is released. If no lesion is found, the DNA wraps around the other UvrB subunit that will check the other stand for damage.</text>
</comment>
<comment type="subunit">
    <text evidence="1">Forms a heterotetramer with UvrA during the search for lesions. Interacts with UvrC in an incision complex.</text>
</comment>
<comment type="subcellular location">
    <subcellularLocation>
        <location evidence="1">Cytoplasm</location>
    </subcellularLocation>
</comment>
<comment type="domain">
    <text evidence="1">The beta-hairpin motif is involved in DNA binding.</text>
</comment>
<comment type="similarity">
    <text evidence="1">Belongs to the UvrB family.</text>
</comment>
<feature type="chain" id="PRO_1000077943" description="UvrABC system protein B">
    <location>
        <begin position="1"/>
        <end position="670"/>
    </location>
</feature>
<feature type="domain" description="Helicase ATP-binding" evidence="1">
    <location>
        <begin position="26"/>
        <end position="183"/>
    </location>
</feature>
<feature type="domain" description="Helicase C-terminal" evidence="1">
    <location>
        <begin position="431"/>
        <end position="597"/>
    </location>
</feature>
<feature type="domain" description="UVR" evidence="1">
    <location>
        <begin position="630"/>
        <end position="665"/>
    </location>
</feature>
<feature type="region of interest" description="Disordered" evidence="2">
    <location>
        <begin position="600"/>
        <end position="620"/>
    </location>
</feature>
<feature type="short sequence motif" description="Beta-hairpin">
    <location>
        <begin position="92"/>
        <end position="115"/>
    </location>
</feature>
<feature type="binding site" evidence="1">
    <location>
        <begin position="39"/>
        <end position="46"/>
    </location>
    <ligand>
        <name>ATP</name>
        <dbReference type="ChEBI" id="CHEBI:30616"/>
    </ligand>
</feature>
<sequence>MSKSFKLHSEFKPAGDQPEAIRKLEEGLENGLAHQTLLGVTGSGKTFTVANVIADLNRPTMVLAPNKTLAAQLYGEMKEFFPENAVEYFVSYYDYYQPEAYVPSSDTFIEKDASVNEHIEQMRLSATKALLERRDVVVVASVSAIYGLGDPDLYLKMMLHLTKGMIIDQRSILRRLSELQYSRNDQVFQRGTFRVRGEVIDIFPAESDEWALRVELFDEEVERLSIFDPLTGQLQHEVPRFTVYPKTHYVTPRERILQAMEDIKVELAERRKVLLANNKLIEEQRITQRTQFDLEMMNELGYCSGIENYSRYLSGRGPGEPPPTLFDYLPSDGLLIVDESHVTIPQIGGMYKGDRSRKETLVEYGFRLPSALDNRPMRFEEFEALAPQTIYVSATPGKYELEKSGGDVIDQVVRPTGLLDPLIEVRPVATQVDDLLSEIRIRAAINERVLVTTLTKRMAEDLTEYLEEHGARVRYLHSDIDTVERVEIIRDLRLGEFDVLVGINLLREGLDMPEVSLVAILDADKEGFLRSERSLIQTIGRAARNLNGKAILYGDRITASMEKAIGETERRRAKQQAYNEERGIIPQGLNKKIGDILQLGQPSTRGKGKGRGGKVADTNNYQSLAPKALDQKIRELEAKMYTHAQNLEFEQAAELRDQVHQLRQQFIAIS</sequence>
<accession>A1JSC3</accession>
<organism>
    <name type="scientific">Yersinia enterocolitica serotype O:8 / biotype 1B (strain NCTC 13174 / 8081)</name>
    <dbReference type="NCBI Taxonomy" id="393305"/>
    <lineage>
        <taxon>Bacteria</taxon>
        <taxon>Pseudomonadati</taxon>
        <taxon>Pseudomonadota</taxon>
        <taxon>Gammaproteobacteria</taxon>
        <taxon>Enterobacterales</taxon>
        <taxon>Yersiniaceae</taxon>
        <taxon>Yersinia</taxon>
    </lineage>
</organism>
<proteinExistence type="inferred from homology"/>
<name>UVRB_YERE8</name>
<reference key="1">
    <citation type="journal article" date="2006" name="PLoS Genet.">
        <title>The complete genome sequence and comparative genome analysis of the high pathogenicity Yersinia enterocolitica strain 8081.</title>
        <authorList>
            <person name="Thomson N.R."/>
            <person name="Howard S."/>
            <person name="Wren B.W."/>
            <person name="Holden M.T.G."/>
            <person name="Crossman L."/>
            <person name="Challis G.L."/>
            <person name="Churcher C."/>
            <person name="Mungall K."/>
            <person name="Brooks K."/>
            <person name="Chillingworth T."/>
            <person name="Feltwell T."/>
            <person name="Abdellah Z."/>
            <person name="Hauser H."/>
            <person name="Jagels K."/>
            <person name="Maddison M."/>
            <person name="Moule S."/>
            <person name="Sanders M."/>
            <person name="Whitehead S."/>
            <person name="Quail M.A."/>
            <person name="Dougan G."/>
            <person name="Parkhill J."/>
            <person name="Prentice M.B."/>
        </authorList>
    </citation>
    <scope>NUCLEOTIDE SEQUENCE [LARGE SCALE GENOMIC DNA]</scope>
    <source>
        <strain>NCTC 13174 / 8081</strain>
    </source>
</reference>
<gene>
    <name evidence="1" type="primary">uvrB</name>
    <name type="ordered locus">YE2902</name>
</gene>
<dbReference type="EMBL" id="AM286415">
    <property type="protein sequence ID" value="CAL12940.1"/>
    <property type="molecule type" value="Genomic_DNA"/>
</dbReference>
<dbReference type="RefSeq" id="WP_011816794.1">
    <property type="nucleotide sequence ID" value="NC_008800.1"/>
</dbReference>
<dbReference type="RefSeq" id="YP_001007090.1">
    <property type="nucleotide sequence ID" value="NC_008800.1"/>
</dbReference>
<dbReference type="SMR" id="A1JSC3"/>
<dbReference type="KEGG" id="yen:YE2902"/>
<dbReference type="PATRIC" id="fig|393305.7.peg.3085"/>
<dbReference type="eggNOG" id="COG0556">
    <property type="taxonomic scope" value="Bacteria"/>
</dbReference>
<dbReference type="HOGENOM" id="CLU_009621_2_1_6"/>
<dbReference type="OrthoDB" id="9806651at2"/>
<dbReference type="Proteomes" id="UP000000642">
    <property type="component" value="Chromosome"/>
</dbReference>
<dbReference type="GO" id="GO:0005737">
    <property type="term" value="C:cytoplasm"/>
    <property type="evidence" value="ECO:0007669"/>
    <property type="project" value="UniProtKB-SubCell"/>
</dbReference>
<dbReference type="GO" id="GO:0009380">
    <property type="term" value="C:excinuclease repair complex"/>
    <property type="evidence" value="ECO:0007669"/>
    <property type="project" value="InterPro"/>
</dbReference>
<dbReference type="GO" id="GO:0005524">
    <property type="term" value="F:ATP binding"/>
    <property type="evidence" value="ECO:0007669"/>
    <property type="project" value="UniProtKB-UniRule"/>
</dbReference>
<dbReference type="GO" id="GO:0016887">
    <property type="term" value="F:ATP hydrolysis activity"/>
    <property type="evidence" value="ECO:0007669"/>
    <property type="project" value="InterPro"/>
</dbReference>
<dbReference type="GO" id="GO:0003677">
    <property type="term" value="F:DNA binding"/>
    <property type="evidence" value="ECO:0007669"/>
    <property type="project" value="UniProtKB-UniRule"/>
</dbReference>
<dbReference type="GO" id="GO:0009381">
    <property type="term" value="F:excinuclease ABC activity"/>
    <property type="evidence" value="ECO:0007669"/>
    <property type="project" value="UniProtKB-UniRule"/>
</dbReference>
<dbReference type="GO" id="GO:0004386">
    <property type="term" value="F:helicase activity"/>
    <property type="evidence" value="ECO:0007669"/>
    <property type="project" value="UniProtKB-KW"/>
</dbReference>
<dbReference type="GO" id="GO:0006289">
    <property type="term" value="P:nucleotide-excision repair"/>
    <property type="evidence" value="ECO:0007669"/>
    <property type="project" value="UniProtKB-UniRule"/>
</dbReference>
<dbReference type="GO" id="GO:0009432">
    <property type="term" value="P:SOS response"/>
    <property type="evidence" value="ECO:0007669"/>
    <property type="project" value="UniProtKB-UniRule"/>
</dbReference>
<dbReference type="CDD" id="cd17916">
    <property type="entry name" value="DEXHc_UvrB"/>
    <property type="match status" value="1"/>
</dbReference>
<dbReference type="CDD" id="cd18790">
    <property type="entry name" value="SF2_C_UvrB"/>
    <property type="match status" value="1"/>
</dbReference>
<dbReference type="FunFam" id="3.40.50.300:FF:000257">
    <property type="entry name" value="UvrABC system protein B"/>
    <property type="match status" value="1"/>
</dbReference>
<dbReference type="FunFam" id="3.40.50.300:FF:000401">
    <property type="entry name" value="UvrABC system protein B"/>
    <property type="match status" value="1"/>
</dbReference>
<dbReference type="FunFam" id="3.40.50.300:FF:000477">
    <property type="entry name" value="UvrABC system protein B"/>
    <property type="match status" value="1"/>
</dbReference>
<dbReference type="Gene3D" id="3.40.50.300">
    <property type="entry name" value="P-loop containing nucleotide triphosphate hydrolases"/>
    <property type="match status" value="3"/>
</dbReference>
<dbReference type="Gene3D" id="4.10.860.10">
    <property type="entry name" value="UVR domain"/>
    <property type="match status" value="1"/>
</dbReference>
<dbReference type="HAMAP" id="MF_00204">
    <property type="entry name" value="UvrB"/>
    <property type="match status" value="1"/>
</dbReference>
<dbReference type="InterPro" id="IPR006935">
    <property type="entry name" value="Helicase/UvrB_N"/>
</dbReference>
<dbReference type="InterPro" id="IPR014001">
    <property type="entry name" value="Helicase_ATP-bd"/>
</dbReference>
<dbReference type="InterPro" id="IPR001650">
    <property type="entry name" value="Helicase_C-like"/>
</dbReference>
<dbReference type="InterPro" id="IPR027417">
    <property type="entry name" value="P-loop_NTPase"/>
</dbReference>
<dbReference type="InterPro" id="IPR001943">
    <property type="entry name" value="UVR_dom"/>
</dbReference>
<dbReference type="InterPro" id="IPR036876">
    <property type="entry name" value="UVR_dom_sf"/>
</dbReference>
<dbReference type="InterPro" id="IPR004807">
    <property type="entry name" value="UvrB"/>
</dbReference>
<dbReference type="InterPro" id="IPR041471">
    <property type="entry name" value="UvrB_inter"/>
</dbReference>
<dbReference type="InterPro" id="IPR024759">
    <property type="entry name" value="UvrB_YAD/RRR_dom"/>
</dbReference>
<dbReference type="NCBIfam" id="NF003673">
    <property type="entry name" value="PRK05298.1"/>
    <property type="match status" value="1"/>
</dbReference>
<dbReference type="NCBIfam" id="TIGR00631">
    <property type="entry name" value="uvrb"/>
    <property type="match status" value="1"/>
</dbReference>
<dbReference type="PANTHER" id="PTHR24029">
    <property type="entry name" value="UVRABC SYSTEM PROTEIN B"/>
    <property type="match status" value="1"/>
</dbReference>
<dbReference type="PANTHER" id="PTHR24029:SF0">
    <property type="entry name" value="UVRABC SYSTEM PROTEIN B"/>
    <property type="match status" value="1"/>
</dbReference>
<dbReference type="Pfam" id="PF00271">
    <property type="entry name" value="Helicase_C"/>
    <property type="match status" value="1"/>
</dbReference>
<dbReference type="Pfam" id="PF04851">
    <property type="entry name" value="ResIII"/>
    <property type="match status" value="1"/>
</dbReference>
<dbReference type="Pfam" id="PF02151">
    <property type="entry name" value="UVR"/>
    <property type="match status" value="1"/>
</dbReference>
<dbReference type="Pfam" id="PF12344">
    <property type="entry name" value="UvrB"/>
    <property type="match status" value="1"/>
</dbReference>
<dbReference type="Pfam" id="PF17757">
    <property type="entry name" value="UvrB_inter"/>
    <property type="match status" value="1"/>
</dbReference>
<dbReference type="SMART" id="SM00487">
    <property type="entry name" value="DEXDc"/>
    <property type="match status" value="1"/>
</dbReference>
<dbReference type="SMART" id="SM00490">
    <property type="entry name" value="HELICc"/>
    <property type="match status" value="1"/>
</dbReference>
<dbReference type="SUPFAM" id="SSF46600">
    <property type="entry name" value="C-terminal UvrC-binding domain of UvrB"/>
    <property type="match status" value="1"/>
</dbReference>
<dbReference type="SUPFAM" id="SSF52540">
    <property type="entry name" value="P-loop containing nucleoside triphosphate hydrolases"/>
    <property type="match status" value="2"/>
</dbReference>
<dbReference type="PROSITE" id="PS51192">
    <property type="entry name" value="HELICASE_ATP_BIND_1"/>
    <property type="match status" value="1"/>
</dbReference>
<dbReference type="PROSITE" id="PS51194">
    <property type="entry name" value="HELICASE_CTER"/>
    <property type="match status" value="1"/>
</dbReference>
<dbReference type="PROSITE" id="PS50151">
    <property type="entry name" value="UVR"/>
    <property type="match status" value="1"/>
</dbReference>
<protein>
    <recommendedName>
        <fullName evidence="1">UvrABC system protein B</fullName>
        <shortName evidence="1">Protein UvrB</shortName>
    </recommendedName>
    <alternativeName>
        <fullName evidence="1">Excinuclease ABC subunit B</fullName>
    </alternativeName>
</protein>